<proteinExistence type="inferred from homology"/>
<protein>
    <recommendedName>
        <fullName evidence="1">Large ribosomal subunit protein bL9</fullName>
    </recommendedName>
    <alternativeName>
        <fullName evidence="2">50S ribosomal protein L9</fullName>
    </alternativeName>
</protein>
<name>RL9_KORVE</name>
<gene>
    <name evidence="1" type="primary">rplI</name>
    <name type="ordered locus">Acid345_4535</name>
</gene>
<comment type="function">
    <text evidence="1">Binds to the 23S rRNA.</text>
</comment>
<comment type="similarity">
    <text evidence="1">Belongs to the bacterial ribosomal protein bL9 family.</text>
</comment>
<dbReference type="EMBL" id="CP000360">
    <property type="protein sequence ID" value="ABF43535.1"/>
    <property type="molecule type" value="Genomic_DNA"/>
</dbReference>
<dbReference type="RefSeq" id="WP_011525332.1">
    <property type="nucleotide sequence ID" value="NC_008009.1"/>
</dbReference>
<dbReference type="SMR" id="Q1IHW5"/>
<dbReference type="STRING" id="204669.Acid345_4535"/>
<dbReference type="EnsemblBacteria" id="ABF43535">
    <property type="protein sequence ID" value="ABF43535"/>
    <property type="gene ID" value="Acid345_4535"/>
</dbReference>
<dbReference type="KEGG" id="aba:Acid345_4535"/>
<dbReference type="eggNOG" id="COG0359">
    <property type="taxonomic scope" value="Bacteria"/>
</dbReference>
<dbReference type="HOGENOM" id="CLU_078938_3_0_0"/>
<dbReference type="OrthoDB" id="9788336at2"/>
<dbReference type="Proteomes" id="UP000002432">
    <property type="component" value="Chromosome"/>
</dbReference>
<dbReference type="GO" id="GO:1990904">
    <property type="term" value="C:ribonucleoprotein complex"/>
    <property type="evidence" value="ECO:0007669"/>
    <property type="project" value="UniProtKB-KW"/>
</dbReference>
<dbReference type="GO" id="GO:0005840">
    <property type="term" value="C:ribosome"/>
    <property type="evidence" value="ECO:0007669"/>
    <property type="project" value="UniProtKB-KW"/>
</dbReference>
<dbReference type="GO" id="GO:0019843">
    <property type="term" value="F:rRNA binding"/>
    <property type="evidence" value="ECO:0007669"/>
    <property type="project" value="UniProtKB-UniRule"/>
</dbReference>
<dbReference type="GO" id="GO:0003735">
    <property type="term" value="F:structural constituent of ribosome"/>
    <property type="evidence" value="ECO:0007669"/>
    <property type="project" value="InterPro"/>
</dbReference>
<dbReference type="GO" id="GO:0006412">
    <property type="term" value="P:translation"/>
    <property type="evidence" value="ECO:0007669"/>
    <property type="project" value="UniProtKB-UniRule"/>
</dbReference>
<dbReference type="Gene3D" id="3.10.430.100">
    <property type="entry name" value="Ribosomal protein L9, C-terminal domain"/>
    <property type="match status" value="1"/>
</dbReference>
<dbReference type="Gene3D" id="3.40.5.10">
    <property type="entry name" value="Ribosomal protein L9, N-terminal domain"/>
    <property type="match status" value="1"/>
</dbReference>
<dbReference type="HAMAP" id="MF_00503">
    <property type="entry name" value="Ribosomal_bL9"/>
    <property type="match status" value="1"/>
</dbReference>
<dbReference type="InterPro" id="IPR000244">
    <property type="entry name" value="Ribosomal_bL9"/>
</dbReference>
<dbReference type="InterPro" id="IPR009027">
    <property type="entry name" value="Ribosomal_bL9/RNase_H1_N"/>
</dbReference>
<dbReference type="InterPro" id="IPR020594">
    <property type="entry name" value="Ribosomal_bL9_bac/chp"/>
</dbReference>
<dbReference type="InterPro" id="IPR020069">
    <property type="entry name" value="Ribosomal_bL9_C"/>
</dbReference>
<dbReference type="InterPro" id="IPR036791">
    <property type="entry name" value="Ribosomal_bL9_C_sf"/>
</dbReference>
<dbReference type="InterPro" id="IPR020070">
    <property type="entry name" value="Ribosomal_bL9_N"/>
</dbReference>
<dbReference type="InterPro" id="IPR036935">
    <property type="entry name" value="Ribosomal_bL9_N_sf"/>
</dbReference>
<dbReference type="NCBIfam" id="TIGR00158">
    <property type="entry name" value="L9"/>
    <property type="match status" value="1"/>
</dbReference>
<dbReference type="PANTHER" id="PTHR21368">
    <property type="entry name" value="50S RIBOSOMAL PROTEIN L9"/>
    <property type="match status" value="1"/>
</dbReference>
<dbReference type="Pfam" id="PF03948">
    <property type="entry name" value="Ribosomal_L9_C"/>
    <property type="match status" value="1"/>
</dbReference>
<dbReference type="Pfam" id="PF01281">
    <property type="entry name" value="Ribosomal_L9_N"/>
    <property type="match status" value="1"/>
</dbReference>
<dbReference type="SUPFAM" id="SSF55658">
    <property type="entry name" value="L9 N-domain-like"/>
    <property type="match status" value="1"/>
</dbReference>
<dbReference type="SUPFAM" id="SSF55653">
    <property type="entry name" value="Ribosomal protein L9 C-domain"/>
    <property type="match status" value="1"/>
</dbReference>
<dbReference type="PROSITE" id="PS00651">
    <property type="entry name" value="RIBOSOMAL_L9"/>
    <property type="match status" value="1"/>
</dbReference>
<keyword id="KW-1185">Reference proteome</keyword>
<keyword id="KW-0687">Ribonucleoprotein</keyword>
<keyword id="KW-0689">Ribosomal protein</keyword>
<keyword id="KW-0694">RNA-binding</keyword>
<keyword id="KW-0699">rRNA-binding</keyword>
<evidence type="ECO:0000255" key="1">
    <source>
        <dbReference type="HAMAP-Rule" id="MF_00503"/>
    </source>
</evidence>
<evidence type="ECO:0000305" key="2"/>
<sequence>MEVILKQDVEKLGHQGDVVKVAEGYGRNYLLPKKLAIEATAANKAVIEQMKAAAVRRIAREKTDAESLAKQFDGVTVTFTRRAGESNQLFGSVTTSDIATELEHKGFKLDRRKLSLVEPIKTTGDFKVALKLHRDVTVDIPVHVAKEAEVAAQ</sequence>
<reference key="1">
    <citation type="journal article" date="2009" name="Appl. Environ. Microbiol.">
        <title>Three genomes from the phylum Acidobacteria provide insight into the lifestyles of these microorganisms in soils.</title>
        <authorList>
            <person name="Ward N.L."/>
            <person name="Challacombe J.F."/>
            <person name="Janssen P.H."/>
            <person name="Henrissat B."/>
            <person name="Coutinho P.M."/>
            <person name="Wu M."/>
            <person name="Xie G."/>
            <person name="Haft D.H."/>
            <person name="Sait M."/>
            <person name="Badger J."/>
            <person name="Barabote R.D."/>
            <person name="Bradley B."/>
            <person name="Brettin T.S."/>
            <person name="Brinkac L.M."/>
            <person name="Bruce D."/>
            <person name="Creasy T."/>
            <person name="Daugherty S.C."/>
            <person name="Davidsen T.M."/>
            <person name="DeBoy R.T."/>
            <person name="Detter J.C."/>
            <person name="Dodson R.J."/>
            <person name="Durkin A.S."/>
            <person name="Ganapathy A."/>
            <person name="Gwinn-Giglio M."/>
            <person name="Han C.S."/>
            <person name="Khouri H."/>
            <person name="Kiss H."/>
            <person name="Kothari S.P."/>
            <person name="Madupu R."/>
            <person name="Nelson K.E."/>
            <person name="Nelson W.C."/>
            <person name="Paulsen I."/>
            <person name="Penn K."/>
            <person name="Ren Q."/>
            <person name="Rosovitz M.J."/>
            <person name="Selengut J.D."/>
            <person name="Shrivastava S."/>
            <person name="Sullivan S.A."/>
            <person name="Tapia R."/>
            <person name="Thompson L.S."/>
            <person name="Watkins K.L."/>
            <person name="Yang Q."/>
            <person name="Yu C."/>
            <person name="Zafar N."/>
            <person name="Zhou L."/>
            <person name="Kuske C.R."/>
        </authorList>
    </citation>
    <scope>NUCLEOTIDE SEQUENCE [LARGE SCALE GENOMIC DNA]</scope>
    <source>
        <strain>Ellin345</strain>
    </source>
</reference>
<accession>Q1IHW5</accession>
<organism>
    <name type="scientific">Koribacter versatilis (strain Ellin345)</name>
    <dbReference type="NCBI Taxonomy" id="204669"/>
    <lineage>
        <taxon>Bacteria</taxon>
        <taxon>Pseudomonadati</taxon>
        <taxon>Acidobacteriota</taxon>
        <taxon>Terriglobia</taxon>
        <taxon>Terriglobales</taxon>
        <taxon>Candidatus Korobacteraceae</taxon>
        <taxon>Candidatus Korobacter</taxon>
    </lineage>
</organism>
<feature type="chain" id="PRO_0000258439" description="Large ribosomal subunit protein bL9">
    <location>
        <begin position="1"/>
        <end position="153"/>
    </location>
</feature>